<sequence length="143" mass="16482">MAKEFSRTRRIAQQLQQELAMVLQRDMKDPRIGFVTVNDVDVSRDLSYAKVYVTFFEEDTELVQQKIDALTVAAPYVRTLVAGRMKLRVMPELRFIYDSSLVEGMRMSNLVTQVINKDKAKQQQFTPDTPDNSESVDGEKEQD</sequence>
<gene>
    <name evidence="1" type="primary">rbfA</name>
    <name type="ordered locus">Sfri_0991</name>
</gene>
<keyword id="KW-0963">Cytoplasm</keyword>
<keyword id="KW-1185">Reference proteome</keyword>
<keyword id="KW-0690">Ribosome biogenesis</keyword>
<proteinExistence type="inferred from homology"/>
<dbReference type="EMBL" id="CP000447">
    <property type="protein sequence ID" value="ABI70844.1"/>
    <property type="molecule type" value="Genomic_DNA"/>
</dbReference>
<dbReference type="RefSeq" id="WP_011636465.1">
    <property type="nucleotide sequence ID" value="NC_008345.1"/>
</dbReference>
<dbReference type="SMR" id="Q086H1"/>
<dbReference type="STRING" id="318167.Sfri_0991"/>
<dbReference type="KEGG" id="sfr:Sfri_0991"/>
<dbReference type="eggNOG" id="COG0858">
    <property type="taxonomic scope" value="Bacteria"/>
</dbReference>
<dbReference type="HOGENOM" id="CLU_089475_5_0_6"/>
<dbReference type="OrthoDB" id="307788at2"/>
<dbReference type="Proteomes" id="UP000000684">
    <property type="component" value="Chromosome"/>
</dbReference>
<dbReference type="GO" id="GO:0005829">
    <property type="term" value="C:cytosol"/>
    <property type="evidence" value="ECO:0007669"/>
    <property type="project" value="TreeGrafter"/>
</dbReference>
<dbReference type="GO" id="GO:0043024">
    <property type="term" value="F:ribosomal small subunit binding"/>
    <property type="evidence" value="ECO:0007669"/>
    <property type="project" value="TreeGrafter"/>
</dbReference>
<dbReference type="GO" id="GO:0030490">
    <property type="term" value="P:maturation of SSU-rRNA"/>
    <property type="evidence" value="ECO:0007669"/>
    <property type="project" value="UniProtKB-UniRule"/>
</dbReference>
<dbReference type="FunFam" id="3.30.300.20:FF:000007">
    <property type="entry name" value="Ribosome-binding factor A"/>
    <property type="match status" value="1"/>
</dbReference>
<dbReference type="Gene3D" id="3.30.300.20">
    <property type="match status" value="1"/>
</dbReference>
<dbReference type="HAMAP" id="MF_00003">
    <property type="entry name" value="RbfA"/>
    <property type="match status" value="1"/>
</dbReference>
<dbReference type="InterPro" id="IPR015946">
    <property type="entry name" value="KH_dom-like_a/b"/>
</dbReference>
<dbReference type="InterPro" id="IPR000238">
    <property type="entry name" value="RbfA"/>
</dbReference>
<dbReference type="InterPro" id="IPR023799">
    <property type="entry name" value="RbfA_dom_sf"/>
</dbReference>
<dbReference type="InterPro" id="IPR020053">
    <property type="entry name" value="Ribosome-bd_factorA_CS"/>
</dbReference>
<dbReference type="NCBIfam" id="TIGR00082">
    <property type="entry name" value="rbfA"/>
    <property type="match status" value="1"/>
</dbReference>
<dbReference type="PANTHER" id="PTHR33515">
    <property type="entry name" value="RIBOSOME-BINDING FACTOR A, CHLOROPLASTIC-RELATED"/>
    <property type="match status" value="1"/>
</dbReference>
<dbReference type="PANTHER" id="PTHR33515:SF1">
    <property type="entry name" value="RIBOSOME-BINDING FACTOR A, CHLOROPLASTIC-RELATED"/>
    <property type="match status" value="1"/>
</dbReference>
<dbReference type="Pfam" id="PF02033">
    <property type="entry name" value="RBFA"/>
    <property type="match status" value="1"/>
</dbReference>
<dbReference type="SUPFAM" id="SSF89919">
    <property type="entry name" value="Ribosome-binding factor A, RbfA"/>
    <property type="match status" value="1"/>
</dbReference>
<dbReference type="PROSITE" id="PS01319">
    <property type="entry name" value="RBFA"/>
    <property type="match status" value="1"/>
</dbReference>
<name>RBFA_SHEFN</name>
<evidence type="ECO:0000255" key="1">
    <source>
        <dbReference type="HAMAP-Rule" id="MF_00003"/>
    </source>
</evidence>
<evidence type="ECO:0000256" key="2">
    <source>
        <dbReference type="SAM" id="MobiDB-lite"/>
    </source>
</evidence>
<reference key="1">
    <citation type="submission" date="2006-08" db="EMBL/GenBank/DDBJ databases">
        <title>Complete sequence of Shewanella frigidimarina NCIMB 400.</title>
        <authorList>
            <consortium name="US DOE Joint Genome Institute"/>
            <person name="Copeland A."/>
            <person name="Lucas S."/>
            <person name="Lapidus A."/>
            <person name="Barry K."/>
            <person name="Detter J.C."/>
            <person name="Glavina del Rio T."/>
            <person name="Hammon N."/>
            <person name="Israni S."/>
            <person name="Dalin E."/>
            <person name="Tice H."/>
            <person name="Pitluck S."/>
            <person name="Fredrickson J.K."/>
            <person name="Kolker E."/>
            <person name="McCuel L.A."/>
            <person name="DiChristina T."/>
            <person name="Nealson K.H."/>
            <person name="Newman D."/>
            <person name="Tiedje J.M."/>
            <person name="Zhou J."/>
            <person name="Romine M.F."/>
            <person name="Culley D.E."/>
            <person name="Serres M."/>
            <person name="Chertkov O."/>
            <person name="Brettin T."/>
            <person name="Bruce D."/>
            <person name="Han C."/>
            <person name="Tapia R."/>
            <person name="Gilna P."/>
            <person name="Schmutz J."/>
            <person name="Larimer F."/>
            <person name="Land M."/>
            <person name="Hauser L."/>
            <person name="Kyrpides N."/>
            <person name="Mikhailova N."/>
            <person name="Richardson P."/>
        </authorList>
    </citation>
    <scope>NUCLEOTIDE SEQUENCE [LARGE SCALE GENOMIC DNA]</scope>
    <source>
        <strain>NCIMB 400</strain>
    </source>
</reference>
<feature type="chain" id="PRO_1000000202" description="Ribosome-binding factor A">
    <location>
        <begin position="1"/>
        <end position="143"/>
    </location>
</feature>
<feature type="region of interest" description="Disordered" evidence="2">
    <location>
        <begin position="119"/>
        <end position="143"/>
    </location>
</feature>
<feature type="compositionally biased region" description="Polar residues" evidence="2">
    <location>
        <begin position="122"/>
        <end position="133"/>
    </location>
</feature>
<comment type="function">
    <text evidence="1">One of several proteins that assist in the late maturation steps of the functional core of the 30S ribosomal subunit. Associates with free 30S ribosomal subunits (but not with 30S subunits that are part of 70S ribosomes or polysomes). Required for efficient processing of 16S rRNA. May interact with the 5'-terminal helix region of 16S rRNA.</text>
</comment>
<comment type="subunit">
    <text evidence="1">Monomer. Binds 30S ribosomal subunits, but not 50S ribosomal subunits or 70S ribosomes.</text>
</comment>
<comment type="subcellular location">
    <subcellularLocation>
        <location evidence="1">Cytoplasm</location>
    </subcellularLocation>
</comment>
<comment type="similarity">
    <text evidence="1">Belongs to the RbfA family.</text>
</comment>
<accession>Q086H1</accession>
<protein>
    <recommendedName>
        <fullName evidence="1">Ribosome-binding factor A</fullName>
    </recommendedName>
</protein>
<organism>
    <name type="scientific">Shewanella frigidimarina (strain NCIMB 400)</name>
    <dbReference type="NCBI Taxonomy" id="318167"/>
    <lineage>
        <taxon>Bacteria</taxon>
        <taxon>Pseudomonadati</taxon>
        <taxon>Pseudomonadota</taxon>
        <taxon>Gammaproteobacteria</taxon>
        <taxon>Alteromonadales</taxon>
        <taxon>Shewanellaceae</taxon>
        <taxon>Shewanella</taxon>
    </lineage>
</organism>